<gene>
    <name type="ordered locus">PH0140</name>
</gene>
<evidence type="ECO:0000255" key="1">
    <source>
        <dbReference type="PROSITE-ProRule" id="PRU00319"/>
    </source>
</evidence>
<evidence type="ECO:0007829" key="2">
    <source>
        <dbReference type="PDB" id="7FBY"/>
    </source>
</evidence>
<name>REG3_PYRHO</name>
<comment type="interaction">
    <interactant intactId="EBI-15665518">
        <id>O57880</id>
    </interactant>
    <interactant intactId="EBI-15665518">
        <id>O57880</id>
        <label>PH0140</label>
    </interactant>
    <organismsDiffer>false</organismsDiffer>
    <experiments>2</experiments>
</comment>
<reference key="1">
    <citation type="journal article" date="1998" name="DNA Res.">
        <title>Complete sequence and gene organization of the genome of a hyper-thermophilic archaebacterium, Pyrococcus horikoshii OT3.</title>
        <authorList>
            <person name="Kawarabayasi Y."/>
            <person name="Sawada M."/>
            <person name="Horikawa H."/>
            <person name="Haikawa Y."/>
            <person name="Hino Y."/>
            <person name="Yamamoto S."/>
            <person name="Sekine M."/>
            <person name="Baba S."/>
            <person name="Kosugi H."/>
            <person name="Hosoyama A."/>
            <person name="Nagai Y."/>
            <person name="Sakai M."/>
            <person name="Ogura K."/>
            <person name="Otsuka R."/>
            <person name="Nakazawa H."/>
            <person name="Takamiya M."/>
            <person name="Ohfuku Y."/>
            <person name="Funahashi T."/>
            <person name="Tanaka T."/>
            <person name="Kudoh Y."/>
            <person name="Yamazaki J."/>
            <person name="Kushida N."/>
            <person name="Oguchi A."/>
            <person name="Aoki K."/>
            <person name="Yoshizawa T."/>
            <person name="Nakamura Y."/>
            <person name="Robb F.T."/>
            <person name="Horikoshi K."/>
            <person name="Masuchi Y."/>
            <person name="Shizuya H."/>
            <person name="Kikuchi H."/>
        </authorList>
    </citation>
    <scope>NUCLEOTIDE SEQUENCE [LARGE SCALE GENOMIC DNA]</scope>
    <source>
        <strain>ATCC 700860 / DSM 12428 / JCM 9974 / NBRC 100139 / OT-3</strain>
    </source>
</reference>
<protein>
    <recommendedName>
        <fullName>Uncharacterized HTH-type transcriptional regulator PH0140</fullName>
    </recommendedName>
</protein>
<dbReference type="EMBL" id="BA000001">
    <property type="protein sequence ID" value="BAA29209.1"/>
    <property type="molecule type" value="Genomic_DNA"/>
</dbReference>
<dbReference type="PIR" id="B71235">
    <property type="entry name" value="B71235"/>
</dbReference>
<dbReference type="RefSeq" id="WP_010884252.1">
    <property type="nucleotide sequence ID" value="NC_000961.1"/>
</dbReference>
<dbReference type="PDB" id="7FBY">
    <property type="method" value="X-ray"/>
    <property type="resolution" value="2.00 A"/>
    <property type="chains" value="A=1-158"/>
</dbReference>
<dbReference type="PDBsum" id="7FBY"/>
<dbReference type="SMR" id="O57880"/>
<dbReference type="STRING" id="70601.gene:9377048"/>
<dbReference type="EnsemblBacteria" id="BAA29209">
    <property type="protein sequence ID" value="BAA29209"/>
    <property type="gene ID" value="BAA29209"/>
</dbReference>
<dbReference type="GeneID" id="1444034"/>
<dbReference type="KEGG" id="pho:PH0140"/>
<dbReference type="eggNOG" id="arCOG01580">
    <property type="taxonomic scope" value="Archaea"/>
</dbReference>
<dbReference type="OrthoDB" id="6762at2157"/>
<dbReference type="Proteomes" id="UP000000752">
    <property type="component" value="Chromosome"/>
</dbReference>
<dbReference type="GO" id="GO:0005829">
    <property type="term" value="C:cytosol"/>
    <property type="evidence" value="ECO:0007669"/>
    <property type="project" value="TreeGrafter"/>
</dbReference>
<dbReference type="GO" id="GO:0042802">
    <property type="term" value="F:identical protein binding"/>
    <property type="evidence" value="ECO:0000353"/>
    <property type="project" value="IntAct"/>
</dbReference>
<dbReference type="GO" id="GO:0043565">
    <property type="term" value="F:sequence-specific DNA binding"/>
    <property type="evidence" value="ECO:0007669"/>
    <property type="project" value="InterPro"/>
</dbReference>
<dbReference type="GO" id="GO:0043200">
    <property type="term" value="P:response to amino acid"/>
    <property type="evidence" value="ECO:0007669"/>
    <property type="project" value="TreeGrafter"/>
</dbReference>
<dbReference type="CDD" id="cd00090">
    <property type="entry name" value="HTH_ARSR"/>
    <property type="match status" value="1"/>
</dbReference>
<dbReference type="FunFam" id="1.10.10.10:FF:000083">
    <property type="entry name" value="AsnC family transcriptional regulator"/>
    <property type="match status" value="1"/>
</dbReference>
<dbReference type="FunFam" id="3.30.70.920:FF:000038">
    <property type="entry name" value="Uncharacterized HTH-type transcriptional regulator PH0140"/>
    <property type="match status" value="1"/>
</dbReference>
<dbReference type="Gene3D" id="3.30.70.920">
    <property type="match status" value="1"/>
</dbReference>
<dbReference type="Gene3D" id="1.10.10.10">
    <property type="entry name" value="Winged helix-like DNA-binding domain superfamily/Winged helix DNA-binding domain"/>
    <property type="match status" value="1"/>
</dbReference>
<dbReference type="InterPro" id="IPR011991">
    <property type="entry name" value="ArsR-like_HTH"/>
</dbReference>
<dbReference type="InterPro" id="IPR000485">
    <property type="entry name" value="AsnC-type_HTH_dom"/>
</dbReference>
<dbReference type="InterPro" id="IPR011008">
    <property type="entry name" value="Dimeric_a/b-barrel"/>
</dbReference>
<dbReference type="InterPro" id="IPR019888">
    <property type="entry name" value="Tscrpt_reg_AsnC-like"/>
</dbReference>
<dbReference type="InterPro" id="IPR019887">
    <property type="entry name" value="Tscrpt_reg_AsnC/Lrp_C"/>
</dbReference>
<dbReference type="InterPro" id="IPR036388">
    <property type="entry name" value="WH-like_DNA-bd_sf"/>
</dbReference>
<dbReference type="InterPro" id="IPR036390">
    <property type="entry name" value="WH_DNA-bd_sf"/>
</dbReference>
<dbReference type="PANTHER" id="PTHR30154">
    <property type="entry name" value="LEUCINE-RESPONSIVE REGULATORY PROTEIN"/>
    <property type="match status" value="1"/>
</dbReference>
<dbReference type="PANTHER" id="PTHR30154:SF34">
    <property type="entry name" value="TRANSCRIPTIONAL REGULATOR AZLB"/>
    <property type="match status" value="1"/>
</dbReference>
<dbReference type="Pfam" id="PF01037">
    <property type="entry name" value="AsnC_trans_reg"/>
    <property type="match status" value="1"/>
</dbReference>
<dbReference type="Pfam" id="PF13412">
    <property type="entry name" value="HTH_24"/>
    <property type="match status" value="1"/>
</dbReference>
<dbReference type="PRINTS" id="PR00033">
    <property type="entry name" value="HTHASNC"/>
</dbReference>
<dbReference type="SMART" id="SM00344">
    <property type="entry name" value="HTH_ASNC"/>
    <property type="match status" value="1"/>
</dbReference>
<dbReference type="SUPFAM" id="SSF54909">
    <property type="entry name" value="Dimeric alpha+beta barrel"/>
    <property type="match status" value="1"/>
</dbReference>
<dbReference type="SUPFAM" id="SSF46785">
    <property type="entry name" value="Winged helix' DNA-binding domain"/>
    <property type="match status" value="1"/>
</dbReference>
<dbReference type="PROSITE" id="PS50956">
    <property type="entry name" value="HTH_ASNC_2"/>
    <property type="match status" value="1"/>
</dbReference>
<keyword id="KW-0002">3D-structure</keyword>
<keyword id="KW-0238">DNA-binding</keyword>
<keyword id="KW-0804">Transcription</keyword>
<keyword id="KW-0805">Transcription regulation</keyword>
<feature type="chain" id="PRO_0000111762" description="Uncharacterized HTH-type transcriptional regulator PH0140">
    <location>
        <begin position="1"/>
        <end position="158"/>
    </location>
</feature>
<feature type="domain" description="HTH asnC-type" evidence="1">
    <location>
        <begin position="12"/>
        <end position="73"/>
    </location>
</feature>
<feature type="DNA-binding region" description="H-T-H motif" evidence="1">
    <location>
        <begin position="31"/>
        <end position="50"/>
    </location>
</feature>
<feature type="helix" evidence="2">
    <location>
        <begin position="14"/>
        <end position="25"/>
    </location>
</feature>
<feature type="helix" evidence="2">
    <location>
        <begin position="31"/>
        <end position="38"/>
    </location>
</feature>
<feature type="helix" evidence="2">
    <location>
        <begin position="42"/>
        <end position="54"/>
    </location>
</feature>
<feature type="turn" evidence="2">
    <location>
        <begin position="67"/>
        <end position="71"/>
    </location>
</feature>
<feature type="strand" evidence="2">
    <location>
        <begin position="74"/>
        <end position="82"/>
    </location>
</feature>
<feature type="helix" evidence="2">
    <location>
        <begin position="84"/>
        <end position="86"/>
    </location>
</feature>
<feature type="helix" evidence="2">
    <location>
        <begin position="87"/>
        <end position="95"/>
    </location>
</feature>
<feature type="strand" evidence="2">
    <location>
        <begin position="100"/>
        <end position="105"/>
    </location>
</feature>
<feature type="strand" evidence="2">
    <location>
        <begin position="107"/>
        <end position="109"/>
    </location>
</feature>
<feature type="strand" evidence="2">
    <location>
        <begin position="111"/>
        <end position="120"/>
    </location>
</feature>
<feature type="helix" evidence="2">
    <location>
        <begin position="121"/>
        <end position="130"/>
    </location>
</feature>
<feature type="helix" evidence="2">
    <location>
        <begin position="132"/>
        <end position="134"/>
    </location>
</feature>
<feature type="strand" evidence="2">
    <location>
        <begin position="138"/>
        <end position="145"/>
    </location>
</feature>
<organism>
    <name type="scientific">Pyrococcus horikoshii (strain ATCC 700860 / DSM 12428 / JCM 9974 / NBRC 100139 / OT-3)</name>
    <dbReference type="NCBI Taxonomy" id="70601"/>
    <lineage>
        <taxon>Archaea</taxon>
        <taxon>Methanobacteriati</taxon>
        <taxon>Methanobacteriota</taxon>
        <taxon>Thermococci</taxon>
        <taxon>Thermococcales</taxon>
        <taxon>Thermococcaceae</taxon>
        <taxon>Pyrococcus</taxon>
    </lineage>
</organism>
<proteinExistence type="evidence at protein level"/>
<accession>O57880</accession>
<sequence>MITVPHSRKVELDEIDRAILRLLQEDGRMSYSEISRRINVPESTVRARVNRLVKEGVIRKFAALINPFKAGYEIVAFIAVDAEPAKVKQVVEELAKFPEVDVLGIVTGAHDIFMQVTVKDLQELERFILEKMAKIDGIKSTETSILTSVKKWGYARVF</sequence>